<reference key="1">
    <citation type="submission" date="2007-11" db="EMBL/GenBank/DDBJ databases">
        <authorList>
            <consortium name="The Salmonella enterica serovar Arizonae Genome Sequencing Project"/>
            <person name="McClelland M."/>
            <person name="Sanderson E.K."/>
            <person name="Porwollik S."/>
            <person name="Spieth J."/>
            <person name="Clifton W.S."/>
            <person name="Fulton R."/>
            <person name="Chunyan W."/>
            <person name="Wollam A."/>
            <person name="Shah N."/>
            <person name="Pepin K."/>
            <person name="Bhonagiri V."/>
            <person name="Nash W."/>
            <person name="Johnson M."/>
            <person name="Thiruvilangam P."/>
            <person name="Wilson R."/>
        </authorList>
    </citation>
    <scope>NUCLEOTIDE SEQUENCE [LARGE SCALE GENOMIC DNA]</scope>
    <source>
        <strain>ATCC BAA-731 / CDC346-86 / RSK2980</strain>
    </source>
</reference>
<proteinExistence type="inferred from homology"/>
<feature type="chain" id="PRO_1000084920" description="DNA polymerase IV">
    <location>
        <begin position="1"/>
        <end position="351"/>
    </location>
</feature>
<feature type="domain" description="UmuC" evidence="1">
    <location>
        <begin position="4"/>
        <end position="185"/>
    </location>
</feature>
<feature type="active site" evidence="1">
    <location>
        <position position="104"/>
    </location>
</feature>
<feature type="binding site" evidence="1">
    <location>
        <position position="8"/>
    </location>
    <ligand>
        <name>Mg(2+)</name>
        <dbReference type="ChEBI" id="CHEBI:18420"/>
    </ligand>
</feature>
<feature type="binding site" evidence="1">
    <location>
        <position position="103"/>
    </location>
    <ligand>
        <name>Mg(2+)</name>
        <dbReference type="ChEBI" id="CHEBI:18420"/>
    </ligand>
</feature>
<feature type="site" description="Substrate discrimination" evidence="1">
    <location>
        <position position="13"/>
    </location>
</feature>
<protein>
    <recommendedName>
        <fullName evidence="1">DNA polymerase IV</fullName>
        <shortName evidence="1">Pol IV</shortName>
        <ecNumber evidence="1">2.7.7.7</ecNumber>
    </recommendedName>
</protein>
<accession>A9MNS1</accession>
<gene>
    <name evidence="1" type="primary">dinB</name>
    <name type="ordered locus">SARI_02697</name>
</gene>
<organism>
    <name type="scientific">Salmonella arizonae (strain ATCC BAA-731 / CDC346-86 / RSK2980)</name>
    <dbReference type="NCBI Taxonomy" id="41514"/>
    <lineage>
        <taxon>Bacteria</taxon>
        <taxon>Pseudomonadati</taxon>
        <taxon>Pseudomonadota</taxon>
        <taxon>Gammaproteobacteria</taxon>
        <taxon>Enterobacterales</taxon>
        <taxon>Enterobacteriaceae</taxon>
        <taxon>Salmonella</taxon>
    </lineage>
</organism>
<keyword id="KW-0963">Cytoplasm</keyword>
<keyword id="KW-0227">DNA damage</keyword>
<keyword id="KW-0234">DNA repair</keyword>
<keyword id="KW-0235">DNA replication</keyword>
<keyword id="KW-0238">DNA-binding</keyword>
<keyword id="KW-0239">DNA-directed DNA polymerase</keyword>
<keyword id="KW-0460">Magnesium</keyword>
<keyword id="KW-0479">Metal-binding</keyword>
<keyword id="KW-0515">Mutator protein</keyword>
<keyword id="KW-0548">Nucleotidyltransferase</keyword>
<keyword id="KW-1185">Reference proteome</keyword>
<keyword id="KW-0808">Transferase</keyword>
<dbReference type="EC" id="2.7.7.7" evidence="1"/>
<dbReference type="EMBL" id="CP000880">
    <property type="protein sequence ID" value="ABX22553.1"/>
    <property type="molecule type" value="Genomic_DNA"/>
</dbReference>
<dbReference type="SMR" id="A9MNS1"/>
<dbReference type="STRING" id="41514.SARI_02697"/>
<dbReference type="KEGG" id="ses:SARI_02697"/>
<dbReference type="HOGENOM" id="CLU_012348_1_2_6"/>
<dbReference type="Proteomes" id="UP000002084">
    <property type="component" value="Chromosome"/>
</dbReference>
<dbReference type="GO" id="GO:0005829">
    <property type="term" value="C:cytosol"/>
    <property type="evidence" value="ECO:0007669"/>
    <property type="project" value="TreeGrafter"/>
</dbReference>
<dbReference type="GO" id="GO:0003684">
    <property type="term" value="F:damaged DNA binding"/>
    <property type="evidence" value="ECO:0007669"/>
    <property type="project" value="InterPro"/>
</dbReference>
<dbReference type="GO" id="GO:0003887">
    <property type="term" value="F:DNA-directed DNA polymerase activity"/>
    <property type="evidence" value="ECO:0007669"/>
    <property type="project" value="UniProtKB-UniRule"/>
</dbReference>
<dbReference type="GO" id="GO:0000287">
    <property type="term" value="F:magnesium ion binding"/>
    <property type="evidence" value="ECO:0007669"/>
    <property type="project" value="UniProtKB-UniRule"/>
</dbReference>
<dbReference type="GO" id="GO:0006261">
    <property type="term" value="P:DNA-templated DNA replication"/>
    <property type="evidence" value="ECO:0007669"/>
    <property type="project" value="UniProtKB-UniRule"/>
</dbReference>
<dbReference type="GO" id="GO:0042276">
    <property type="term" value="P:error-prone translesion synthesis"/>
    <property type="evidence" value="ECO:0007669"/>
    <property type="project" value="TreeGrafter"/>
</dbReference>
<dbReference type="GO" id="GO:0009432">
    <property type="term" value="P:SOS response"/>
    <property type="evidence" value="ECO:0007669"/>
    <property type="project" value="TreeGrafter"/>
</dbReference>
<dbReference type="CDD" id="cd03586">
    <property type="entry name" value="PolY_Pol_IV_kappa"/>
    <property type="match status" value="1"/>
</dbReference>
<dbReference type="FunFam" id="1.10.150.20:FF:000019">
    <property type="entry name" value="DNA polymerase IV"/>
    <property type="match status" value="1"/>
</dbReference>
<dbReference type="FunFam" id="3.30.1490.100:FF:000002">
    <property type="entry name" value="DNA polymerase IV"/>
    <property type="match status" value="1"/>
</dbReference>
<dbReference type="FunFam" id="3.30.70.270:FF:000002">
    <property type="entry name" value="DNA polymerase IV"/>
    <property type="match status" value="1"/>
</dbReference>
<dbReference type="FunFam" id="3.40.1170.60:FF:000001">
    <property type="entry name" value="DNA polymerase IV"/>
    <property type="match status" value="1"/>
</dbReference>
<dbReference type="Gene3D" id="3.30.70.270">
    <property type="match status" value="1"/>
</dbReference>
<dbReference type="Gene3D" id="3.40.1170.60">
    <property type="match status" value="1"/>
</dbReference>
<dbReference type="Gene3D" id="1.10.150.20">
    <property type="entry name" value="5' to 3' exonuclease, C-terminal subdomain"/>
    <property type="match status" value="1"/>
</dbReference>
<dbReference type="Gene3D" id="3.30.1490.100">
    <property type="entry name" value="DNA polymerase, Y-family, little finger domain"/>
    <property type="match status" value="1"/>
</dbReference>
<dbReference type="HAMAP" id="MF_01113">
    <property type="entry name" value="DNApol_IV"/>
    <property type="match status" value="1"/>
</dbReference>
<dbReference type="InterPro" id="IPR043502">
    <property type="entry name" value="DNA/RNA_pol_sf"/>
</dbReference>
<dbReference type="InterPro" id="IPR036775">
    <property type="entry name" value="DNA_pol_Y-fam_lit_finger_sf"/>
</dbReference>
<dbReference type="InterPro" id="IPR017961">
    <property type="entry name" value="DNA_pol_Y-fam_little_finger"/>
</dbReference>
<dbReference type="InterPro" id="IPR050116">
    <property type="entry name" value="DNA_polymerase-Y"/>
</dbReference>
<dbReference type="InterPro" id="IPR022880">
    <property type="entry name" value="DNApol_IV"/>
</dbReference>
<dbReference type="InterPro" id="IPR053848">
    <property type="entry name" value="IMS_HHH_1"/>
</dbReference>
<dbReference type="InterPro" id="IPR043128">
    <property type="entry name" value="Rev_trsase/Diguanyl_cyclase"/>
</dbReference>
<dbReference type="InterPro" id="IPR001126">
    <property type="entry name" value="UmuC"/>
</dbReference>
<dbReference type="NCBIfam" id="NF002677">
    <property type="entry name" value="PRK02406.1"/>
    <property type="match status" value="1"/>
</dbReference>
<dbReference type="PANTHER" id="PTHR11076:SF33">
    <property type="entry name" value="DNA POLYMERASE KAPPA"/>
    <property type="match status" value="1"/>
</dbReference>
<dbReference type="PANTHER" id="PTHR11076">
    <property type="entry name" value="DNA REPAIR POLYMERASE UMUC / TRANSFERASE FAMILY MEMBER"/>
    <property type="match status" value="1"/>
</dbReference>
<dbReference type="Pfam" id="PF00817">
    <property type="entry name" value="IMS"/>
    <property type="match status" value="1"/>
</dbReference>
<dbReference type="Pfam" id="PF11799">
    <property type="entry name" value="IMS_C"/>
    <property type="match status" value="1"/>
</dbReference>
<dbReference type="Pfam" id="PF21999">
    <property type="entry name" value="IMS_HHH_1"/>
    <property type="match status" value="1"/>
</dbReference>
<dbReference type="SUPFAM" id="SSF56672">
    <property type="entry name" value="DNA/RNA polymerases"/>
    <property type="match status" value="1"/>
</dbReference>
<dbReference type="SUPFAM" id="SSF100879">
    <property type="entry name" value="Lesion bypass DNA polymerase (Y-family), little finger domain"/>
    <property type="match status" value="1"/>
</dbReference>
<dbReference type="PROSITE" id="PS50173">
    <property type="entry name" value="UMUC"/>
    <property type="match status" value="1"/>
</dbReference>
<sequence length="351" mass="39549">MRKIIHVDMDCFFAAVEMRDNPALRDIPIAIGGSRECRGVISTANYPARQFGVRSAMPTAMALKLCPHLTLLPGRFDAYKEASRHVRDIFSRYTSLIEPLSLDEAWLDVTDTPHCYGSATLIAREIRQTIFNELQLTASAGVAPVKFLAKIASDLNKPNGQYVITPADVPDFLKTLPLAKIPGVGKVSAAKLESMGLITCGDIQQCDLAMLLKRFGKFGRVLWERSQGIDERDVNSERLRKSVGVERTLAEDIHEWSDCEAIIERLYPELERRLATVKPDLLIARQGVKLKFNDFQQTTQEHVWPQLNKEDLISTARKTWNERRGDRGVRLVGLHVTLLHPQLERQLVLGL</sequence>
<evidence type="ECO:0000255" key="1">
    <source>
        <dbReference type="HAMAP-Rule" id="MF_01113"/>
    </source>
</evidence>
<comment type="function">
    <text evidence="1">Poorly processive, error-prone DNA polymerase involved in untargeted mutagenesis. Copies undamaged DNA at stalled replication forks, which arise in vivo from mismatched or misaligned primer ends. These misaligned primers can be extended by PolIV. Exhibits no 3'-5' exonuclease (proofreading) activity. May be involved in translesional synthesis, in conjunction with the beta clamp from PolIII.</text>
</comment>
<comment type="catalytic activity">
    <reaction evidence="1">
        <text>DNA(n) + a 2'-deoxyribonucleoside 5'-triphosphate = DNA(n+1) + diphosphate</text>
        <dbReference type="Rhea" id="RHEA:22508"/>
        <dbReference type="Rhea" id="RHEA-COMP:17339"/>
        <dbReference type="Rhea" id="RHEA-COMP:17340"/>
        <dbReference type="ChEBI" id="CHEBI:33019"/>
        <dbReference type="ChEBI" id="CHEBI:61560"/>
        <dbReference type="ChEBI" id="CHEBI:173112"/>
        <dbReference type="EC" id="2.7.7.7"/>
    </reaction>
</comment>
<comment type="cofactor">
    <cofactor evidence="1">
        <name>Mg(2+)</name>
        <dbReference type="ChEBI" id="CHEBI:18420"/>
    </cofactor>
    <text evidence="1">Binds 2 magnesium ions per subunit.</text>
</comment>
<comment type="subunit">
    <text evidence="1">Monomer.</text>
</comment>
<comment type="subcellular location">
    <subcellularLocation>
        <location evidence="1">Cytoplasm</location>
    </subcellularLocation>
</comment>
<comment type="similarity">
    <text evidence="1">Belongs to the DNA polymerase type-Y family.</text>
</comment>
<name>DPO4_SALAR</name>